<feature type="chain" id="PRO_0000359778" description="Transmembrane protein 267">
    <location>
        <begin position="1"/>
        <end position="221"/>
    </location>
</feature>
<feature type="transmembrane region" description="Helical" evidence="1">
    <location>
        <begin position="28"/>
        <end position="48"/>
    </location>
</feature>
<feature type="transmembrane region" description="Helical" evidence="1">
    <location>
        <begin position="57"/>
        <end position="77"/>
    </location>
</feature>
<feature type="transmembrane region" description="Helical" evidence="1">
    <location>
        <begin position="86"/>
        <end position="106"/>
    </location>
</feature>
<feature type="transmembrane region" description="Helical" evidence="1">
    <location>
        <begin position="121"/>
        <end position="141"/>
    </location>
</feature>
<feature type="transmembrane region" description="Helical" evidence="1">
    <location>
        <begin position="182"/>
        <end position="204"/>
    </location>
</feature>
<feature type="sequence conflict" description="In Ref. 2; AAI07629." evidence="2" ref="2">
    <original>S</original>
    <variation>P</variation>
    <location>
        <position position="94"/>
    </location>
</feature>
<dbReference type="EMBL" id="AL603744">
    <property type="protein sequence ID" value="CAD60648.1"/>
    <property type="status" value="ALT_INIT"/>
    <property type="molecule type" value="Genomic_DNA"/>
</dbReference>
<dbReference type="EMBL" id="BC078204">
    <property type="protein sequence ID" value="AAH78204.1"/>
    <property type="molecule type" value="mRNA"/>
</dbReference>
<dbReference type="EMBL" id="BC107628">
    <property type="protein sequence ID" value="AAI07629.2"/>
    <property type="molecule type" value="mRNA"/>
</dbReference>
<dbReference type="RefSeq" id="NP_001003574.1">
    <property type="nucleotide sequence ID" value="NM_001003574.1"/>
</dbReference>
<dbReference type="RefSeq" id="NP_001004514.1">
    <property type="nucleotide sequence ID" value="NM_001004514.1"/>
</dbReference>
<dbReference type="FunCoup" id="Q6DC75">
    <property type="interactions" value="395"/>
</dbReference>
<dbReference type="STRING" id="7955.ENSDARP00000119950"/>
<dbReference type="PaxDb" id="7955-ENSDARP00000110830"/>
<dbReference type="GeneID" id="368645"/>
<dbReference type="KEGG" id="dre:368645"/>
<dbReference type="AGR" id="ZFIN:ZDB-GENE-030616-546"/>
<dbReference type="CTD" id="64417"/>
<dbReference type="ZFIN" id="ZDB-GENE-030616-546">
    <property type="gene designation" value="tmem267"/>
</dbReference>
<dbReference type="eggNOG" id="ENOG502QQ1U">
    <property type="taxonomic scope" value="Eukaryota"/>
</dbReference>
<dbReference type="InParanoid" id="Q6DC75"/>
<dbReference type="OrthoDB" id="10014558at2759"/>
<dbReference type="PhylomeDB" id="Q6DC75"/>
<dbReference type="TreeFam" id="TF323520"/>
<dbReference type="PRO" id="PR:Q6DC75"/>
<dbReference type="Proteomes" id="UP000000437">
    <property type="component" value="Chromosome 10"/>
</dbReference>
<dbReference type="GO" id="GO:0016020">
    <property type="term" value="C:membrane"/>
    <property type="evidence" value="ECO:0007669"/>
    <property type="project" value="UniProtKB-SubCell"/>
</dbReference>
<dbReference type="InterPro" id="IPR026572">
    <property type="entry name" value="TMEM267"/>
</dbReference>
<dbReference type="PANTHER" id="PTHR13628">
    <property type="entry name" value="TRANSMEMBRANE PROTEIN 267"/>
    <property type="match status" value="1"/>
</dbReference>
<dbReference type="PANTHER" id="PTHR13628:SF1">
    <property type="entry name" value="TRANSMEMBRANE PROTEIN 267"/>
    <property type="match status" value="1"/>
</dbReference>
<proteinExistence type="evidence at transcript level"/>
<sequence>MAVPLNLAVETEKAQALLQTFSTASLFASAGLGAFCFVADHFLTLPFIQHHLWLRALFDNTVHAIIGLWSWAIVIGLRKKSDFYEVILAGFLASVIDLDHFYMAGSLSIKAAVNLPHRPPLHCSTLIPALCFSLRLLMWACRLKDSWCSLPWMLFISLTSHHIRDGVRHGLWVCPFGNTAPISYWLYVTITATLPHLCSVLMYLTGTRDMISTKHGVAIDV</sequence>
<accession>Q6DC75</accession>
<accession>Q3B7F6</accession>
<accession>Q7ZZ94</accession>
<name>TM267_DANRE</name>
<reference key="1">
    <citation type="journal article" date="2013" name="Nature">
        <title>The zebrafish reference genome sequence and its relationship to the human genome.</title>
        <authorList>
            <person name="Howe K."/>
            <person name="Clark M.D."/>
            <person name="Torroja C.F."/>
            <person name="Torrance J."/>
            <person name="Berthelot C."/>
            <person name="Muffato M."/>
            <person name="Collins J.E."/>
            <person name="Humphray S."/>
            <person name="McLaren K."/>
            <person name="Matthews L."/>
            <person name="McLaren S."/>
            <person name="Sealy I."/>
            <person name="Caccamo M."/>
            <person name="Churcher C."/>
            <person name="Scott C."/>
            <person name="Barrett J.C."/>
            <person name="Koch R."/>
            <person name="Rauch G.J."/>
            <person name="White S."/>
            <person name="Chow W."/>
            <person name="Kilian B."/>
            <person name="Quintais L.T."/>
            <person name="Guerra-Assuncao J.A."/>
            <person name="Zhou Y."/>
            <person name="Gu Y."/>
            <person name="Yen J."/>
            <person name="Vogel J.H."/>
            <person name="Eyre T."/>
            <person name="Redmond S."/>
            <person name="Banerjee R."/>
            <person name="Chi J."/>
            <person name="Fu B."/>
            <person name="Langley E."/>
            <person name="Maguire S.F."/>
            <person name="Laird G.K."/>
            <person name="Lloyd D."/>
            <person name="Kenyon E."/>
            <person name="Donaldson S."/>
            <person name="Sehra H."/>
            <person name="Almeida-King J."/>
            <person name="Loveland J."/>
            <person name="Trevanion S."/>
            <person name="Jones M."/>
            <person name="Quail M."/>
            <person name="Willey D."/>
            <person name="Hunt A."/>
            <person name="Burton J."/>
            <person name="Sims S."/>
            <person name="McLay K."/>
            <person name="Plumb B."/>
            <person name="Davis J."/>
            <person name="Clee C."/>
            <person name="Oliver K."/>
            <person name="Clark R."/>
            <person name="Riddle C."/>
            <person name="Elliot D."/>
            <person name="Threadgold G."/>
            <person name="Harden G."/>
            <person name="Ware D."/>
            <person name="Begum S."/>
            <person name="Mortimore B."/>
            <person name="Kerry G."/>
            <person name="Heath P."/>
            <person name="Phillimore B."/>
            <person name="Tracey A."/>
            <person name="Corby N."/>
            <person name="Dunn M."/>
            <person name="Johnson C."/>
            <person name="Wood J."/>
            <person name="Clark S."/>
            <person name="Pelan S."/>
            <person name="Griffiths G."/>
            <person name="Smith M."/>
            <person name="Glithero R."/>
            <person name="Howden P."/>
            <person name="Barker N."/>
            <person name="Lloyd C."/>
            <person name="Stevens C."/>
            <person name="Harley J."/>
            <person name="Holt K."/>
            <person name="Panagiotidis G."/>
            <person name="Lovell J."/>
            <person name="Beasley H."/>
            <person name="Henderson C."/>
            <person name="Gordon D."/>
            <person name="Auger K."/>
            <person name="Wright D."/>
            <person name="Collins J."/>
            <person name="Raisen C."/>
            <person name="Dyer L."/>
            <person name="Leung K."/>
            <person name="Robertson L."/>
            <person name="Ambridge K."/>
            <person name="Leongamornlert D."/>
            <person name="McGuire S."/>
            <person name="Gilderthorp R."/>
            <person name="Griffiths C."/>
            <person name="Manthravadi D."/>
            <person name="Nichol S."/>
            <person name="Barker G."/>
            <person name="Whitehead S."/>
            <person name="Kay M."/>
            <person name="Brown J."/>
            <person name="Murnane C."/>
            <person name="Gray E."/>
            <person name="Humphries M."/>
            <person name="Sycamore N."/>
            <person name="Barker D."/>
            <person name="Saunders D."/>
            <person name="Wallis J."/>
            <person name="Babbage A."/>
            <person name="Hammond S."/>
            <person name="Mashreghi-Mohammadi M."/>
            <person name="Barr L."/>
            <person name="Martin S."/>
            <person name="Wray P."/>
            <person name="Ellington A."/>
            <person name="Matthews N."/>
            <person name="Ellwood M."/>
            <person name="Woodmansey R."/>
            <person name="Clark G."/>
            <person name="Cooper J."/>
            <person name="Tromans A."/>
            <person name="Grafham D."/>
            <person name="Skuce C."/>
            <person name="Pandian R."/>
            <person name="Andrews R."/>
            <person name="Harrison E."/>
            <person name="Kimberley A."/>
            <person name="Garnett J."/>
            <person name="Fosker N."/>
            <person name="Hall R."/>
            <person name="Garner P."/>
            <person name="Kelly D."/>
            <person name="Bird C."/>
            <person name="Palmer S."/>
            <person name="Gehring I."/>
            <person name="Berger A."/>
            <person name="Dooley C.M."/>
            <person name="Ersan-Urun Z."/>
            <person name="Eser C."/>
            <person name="Geiger H."/>
            <person name="Geisler M."/>
            <person name="Karotki L."/>
            <person name="Kirn A."/>
            <person name="Konantz J."/>
            <person name="Konantz M."/>
            <person name="Oberlander M."/>
            <person name="Rudolph-Geiger S."/>
            <person name="Teucke M."/>
            <person name="Lanz C."/>
            <person name="Raddatz G."/>
            <person name="Osoegawa K."/>
            <person name="Zhu B."/>
            <person name="Rapp A."/>
            <person name="Widaa S."/>
            <person name="Langford C."/>
            <person name="Yang F."/>
            <person name="Schuster S.C."/>
            <person name="Carter N.P."/>
            <person name="Harrow J."/>
            <person name="Ning Z."/>
            <person name="Herrero J."/>
            <person name="Searle S.M."/>
            <person name="Enright A."/>
            <person name="Geisler R."/>
            <person name="Plasterk R.H."/>
            <person name="Lee C."/>
            <person name="Westerfield M."/>
            <person name="de Jong P.J."/>
            <person name="Zon L.I."/>
            <person name="Postlethwait J.H."/>
            <person name="Nusslein-Volhard C."/>
            <person name="Hubbard T.J."/>
            <person name="Roest Crollius H."/>
            <person name="Rogers J."/>
            <person name="Stemple D.L."/>
        </authorList>
    </citation>
    <scope>NUCLEOTIDE SEQUENCE [LARGE SCALE GENOMIC DNA]</scope>
    <source>
        <strain>Tuebingen</strain>
    </source>
</reference>
<reference key="2">
    <citation type="submission" date="2005-10" db="EMBL/GenBank/DDBJ databases">
        <authorList>
            <consortium name="NIH - Zebrafish Gene Collection (ZGC) project"/>
        </authorList>
    </citation>
    <scope>NUCLEOTIDE SEQUENCE [LARGE SCALE MRNA]</scope>
    <source>
        <tissue>Embryo</tissue>
        <tissue>Intestine</tissue>
    </source>
</reference>
<comment type="subcellular location">
    <subcellularLocation>
        <location evidence="2">Membrane</location>
        <topology evidence="2">Multi-pass membrane protein</topology>
    </subcellularLocation>
</comment>
<comment type="sequence caution" evidence="2">
    <conflict type="erroneous initiation">
        <sequence resource="EMBL-CDS" id="CAD60648"/>
    </conflict>
</comment>
<gene>
    <name type="primary">tmem267</name>
    <name type="ORF">si:busm1-79m10.4</name>
    <name type="ORF">si:dz79m10.4</name>
</gene>
<evidence type="ECO:0000255" key="1"/>
<evidence type="ECO:0000305" key="2"/>
<keyword id="KW-0472">Membrane</keyword>
<keyword id="KW-1185">Reference proteome</keyword>
<keyword id="KW-0812">Transmembrane</keyword>
<keyword id="KW-1133">Transmembrane helix</keyword>
<protein>
    <recommendedName>
        <fullName>Transmembrane protein 267</fullName>
    </recommendedName>
</protein>
<organism>
    <name type="scientific">Danio rerio</name>
    <name type="common">Zebrafish</name>
    <name type="synonym">Brachydanio rerio</name>
    <dbReference type="NCBI Taxonomy" id="7955"/>
    <lineage>
        <taxon>Eukaryota</taxon>
        <taxon>Metazoa</taxon>
        <taxon>Chordata</taxon>
        <taxon>Craniata</taxon>
        <taxon>Vertebrata</taxon>
        <taxon>Euteleostomi</taxon>
        <taxon>Actinopterygii</taxon>
        <taxon>Neopterygii</taxon>
        <taxon>Teleostei</taxon>
        <taxon>Ostariophysi</taxon>
        <taxon>Cypriniformes</taxon>
        <taxon>Danionidae</taxon>
        <taxon>Danioninae</taxon>
        <taxon>Danio</taxon>
    </lineage>
</organism>